<organism>
    <name type="scientific">Photobacterium leiognathi</name>
    <dbReference type="NCBI Taxonomy" id="553611"/>
    <lineage>
        <taxon>Bacteria</taxon>
        <taxon>Pseudomonadati</taxon>
        <taxon>Pseudomonadota</taxon>
        <taxon>Gammaproteobacteria</taxon>
        <taxon>Vibrionales</taxon>
        <taxon>Vibrionaceae</taxon>
        <taxon>Photobacterium</taxon>
    </lineage>
</organism>
<proteinExistence type="inferred from homology"/>
<comment type="function">
    <text evidence="1">Catalyzes the dismutation of two molecules of 6,7-dimethyl-8-ribityllumazine, resulting in the formation of riboflavin and 5-amino-6-(D-ribitylamino)uracil.</text>
</comment>
<comment type="catalytic activity">
    <reaction>
        <text>2 6,7-dimethyl-8-(1-D-ribityl)lumazine + H(+) = 5-amino-6-(D-ribitylamino)uracil + riboflavin</text>
        <dbReference type="Rhea" id="RHEA:20772"/>
        <dbReference type="ChEBI" id="CHEBI:15378"/>
        <dbReference type="ChEBI" id="CHEBI:15934"/>
        <dbReference type="ChEBI" id="CHEBI:57986"/>
        <dbReference type="ChEBI" id="CHEBI:58201"/>
        <dbReference type="EC" id="2.5.1.9"/>
    </reaction>
</comment>
<comment type="pathway">
    <text>Cofactor biosynthesis; riboflavin biosynthesis; riboflavin from 2-hydroxy-3-oxobutyl phosphate and 5-amino-6-(D-ribitylamino)uracil: step 2/2.</text>
</comment>
<comment type="subunit">
    <text evidence="1">Homotrimer.</text>
</comment>
<keyword id="KW-0677">Repeat</keyword>
<keyword id="KW-0686">Riboflavin biosynthesis</keyword>
<keyword id="KW-0808">Transferase</keyword>
<name>RISA_PHOLE</name>
<protein>
    <recommendedName>
        <fullName>Riboflavin synthase</fullName>
        <shortName>RS</shortName>
        <ecNumber>2.5.1.9</ecNumber>
    </recommendedName>
</protein>
<dbReference type="EC" id="2.5.1.9"/>
<dbReference type="EMBL" id="M90094">
    <property type="protein sequence ID" value="AAA73228.1"/>
    <property type="molecule type" value="Genomic_DNA"/>
</dbReference>
<dbReference type="PIR" id="JC1187">
    <property type="entry name" value="JC1187"/>
</dbReference>
<dbReference type="SMR" id="Q01993"/>
<dbReference type="UniPathway" id="UPA00275">
    <property type="reaction ID" value="UER00405"/>
</dbReference>
<dbReference type="GO" id="GO:0004746">
    <property type="term" value="F:riboflavin synthase activity"/>
    <property type="evidence" value="ECO:0007669"/>
    <property type="project" value="UniProtKB-EC"/>
</dbReference>
<dbReference type="GO" id="GO:0009231">
    <property type="term" value="P:riboflavin biosynthetic process"/>
    <property type="evidence" value="ECO:0007669"/>
    <property type="project" value="UniProtKB-UniPathway"/>
</dbReference>
<dbReference type="CDD" id="cd00402">
    <property type="entry name" value="Riboflavin_synthase_like"/>
    <property type="match status" value="1"/>
</dbReference>
<dbReference type="FunFam" id="2.40.30.20:FF:000004">
    <property type="entry name" value="Riboflavin synthase, alpha subunit"/>
    <property type="match status" value="1"/>
</dbReference>
<dbReference type="Gene3D" id="2.40.30.20">
    <property type="match status" value="2"/>
</dbReference>
<dbReference type="InterPro" id="IPR023366">
    <property type="entry name" value="ATP_synth_asu-like_sf"/>
</dbReference>
<dbReference type="InterPro" id="IPR001783">
    <property type="entry name" value="Lumazine-bd"/>
</dbReference>
<dbReference type="InterPro" id="IPR026017">
    <property type="entry name" value="Lumazine-bd_dom"/>
</dbReference>
<dbReference type="InterPro" id="IPR017938">
    <property type="entry name" value="Riboflavin_synthase-like_b-brl"/>
</dbReference>
<dbReference type="NCBIfam" id="NF006767">
    <property type="entry name" value="PRK09289.1"/>
    <property type="match status" value="1"/>
</dbReference>
<dbReference type="NCBIfam" id="NF009566">
    <property type="entry name" value="PRK13020.1"/>
    <property type="match status" value="1"/>
</dbReference>
<dbReference type="NCBIfam" id="TIGR00187">
    <property type="entry name" value="ribE"/>
    <property type="match status" value="1"/>
</dbReference>
<dbReference type="PANTHER" id="PTHR21098:SF12">
    <property type="entry name" value="RIBOFLAVIN SYNTHASE"/>
    <property type="match status" value="1"/>
</dbReference>
<dbReference type="PANTHER" id="PTHR21098">
    <property type="entry name" value="RIBOFLAVIN SYNTHASE ALPHA CHAIN"/>
    <property type="match status" value="1"/>
</dbReference>
<dbReference type="Pfam" id="PF00677">
    <property type="entry name" value="Lum_binding"/>
    <property type="match status" value="2"/>
</dbReference>
<dbReference type="PIRSF" id="PIRSF000498">
    <property type="entry name" value="Riboflavin_syn_A"/>
    <property type="match status" value="1"/>
</dbReference>
<dbReference type="SUPFAM" id="SSF63380">
    <property type="entry name" value="Riboflavin synthase domain-like"/>
    <property type="match status" value="2"/>
</dbReference>
<dbReference type="PROSITE" id="PS51177">
    <property type="entry name" value="LUMAZINE_BIND"/>
    <property type="match status" value="2"/>
</dbReference>
<evidence type="ECO:0000250" key="1"/>
<evidence type="ECO:0000250" key="2">
    <source>
        <dbReference type="UniProtKB" id="P0AFU8"/>
    </source>
</evidence>
<evidence type="ECO:0000250" key="3">
    <source>
        <dbReference type="UniProtKB" id="Q2YN92"/>
    </source>
</evidence>
<reference key="1">
    <citation type="journal article" date="1992" name="Biochem. Biophys. Res. Commun.">
        <title>The lux genes in Photobacterium leiognathi are closely linked with genes corresponding in sequence to riboflavin synthesis genes.</title>
        <authorList>
            <person name="Lee C.Y."/>
            <person name="Meighen E.A."/>
        </authorList>
    </citation>
    <scope>NUCLEOTIDE SEQUENCE [GENOMIC DNA]</scope>
    <source>
        <strain>ATCC 25521 / DSM 21260 / CCUG 16229 / CIP 66.5 / NCIMB 2193 / L1</strain>
    </source>
</reference>
<accession>Q01993</accession>
<sequence length="218" mass="24095">MFTGIIESIGNIGAIIRHNEDLSIVVNTNNLDISDVNIGDSIATNGVCLTVSKLLPSGYTADLSLETYKRTAFHSYRIGQEVNLEKAMLPTTRLGGHLVSGHVDGVGEVIEFKRNGRAINIWVAVPVQLKKYLSEKGSVTIDGISLTINAVYQNVIKLTIVPHTLAETNLVNINIDKKVNVEIDMMARYLEKLIKVDRYESEKTSNVSMDLERYGFIS</sequence>
<gene>
    <name type="primary">ribE</name>
    <name type="synonym">ribB</name>
</gene>
<feature type="chain" id="PRO_0000068170" description="Riboflavin synthase">
    <location>
        <begin position="1"/>
        <end position="218"/>
    </location>
</feature>
<feature type="repeat" description="Lumazine-binding 1">
    <location>
        <begin position="1"/>
        <end position="97"/>
    </location>
</feature>
<feature type="repeat" description="Lumazine-binding 2">
    <location>
        <begin position="98"/>
        <end position="194"/>
    </location>
</feature>
<feature type="binding site" evidence="3">
    <location>
        <begin position="4"/>
        <end position="6"/>
    </location>
    <ligand>
        <name>2,4-dihydroxypteridine</name>
        <dbReference type="ChEBI" id="CHEBI:16489"/>
        <label>1</label>
    </ligand>
</feature>
<feature type="binding site" evidence="3">
    <location>
        <begin position="48"/>
        <end position="50"/>
    </location>
    <ligand>
        <name>2,4-dihydroxypteridine</name>
        <dbReference type="ChEBI" id="CHEBI:16489"/>
        <label>2</label>
        <note>ligand shared between two trimeric partners</note>
    </ligand>
</feature>
<feature type="binding site" evidence="2">
    <location>
        <begin position="62"/>
        <end position="67"/>
    </location>
    <ligand>
        <name>2,4-dihydroxypteridine</name>
        <dbReference type="ChEBI" id="CHEBI:16489"/>
        <label>2</label>
        <note>ligand shared between two trimeric partners</note>
    </ligand>
</feature>
<feature type="binding site" evidence="3">
    <location>
        <begin position="101"/>
        <end position="103"/>
    </location>
    <ligand>
        <name>2,4-dihydroxypteridine</name>
        <dbReference type="ChEBI" id="CHEBI:16489"/>
        <label>2</label>
        <note>ligand shared between two trimeric partners</note>
    </ligand>
</feature>
<feature type="binding site" description="in other chain" evidence="3">
    <location>
        <position position="136"/>
    </location>
    <ligand>
        <name>2,4-dihydroxypteridine</name>
        <dbReference type="ChEBI" id="CHEBI:16489"/>
        <label>2</label>
        <note>ligand shared between two trimeric partners</note>
    </ligand>
</feature>
<feature type="binding site" evidence="3">
    <location>
        <begin position="145"/>
        <end position="147"/>
    </location>
    <ligand>
        <name>2,4-dihydroxypteridine</name>
        <dbReference type="ChEBI" id="CHEBI:16489"/>
        <label>1</label>
    </ligand>
</feature>
<feature type="binding site" evidence="3">
    <location>
        <begin position="159"/>
        <end position="164"/>
    </location>
    <ligand>
        <name>2,4-dihydroxypteridine</name>
        <dbReference type="ChEBI" id="CHEBI:16489"/>
        <label>1</label>
    </ligand>
</feature>